<organism>
    <name type="scientific">Dictyostelium discoideum</name>
    <name type="common">Social amoeba</name>
    <dbReference type="NCBI Taxonomy" id="44689"/>
    <lineage>
        <taxon>Eukaryota</taxon>
        <taxon>Amoebozoa</taxon>
        <taxon>Evosea</taxon>
        <taxon>Eumycetozoa</taxon>
        <taxon>Dictyostelia</taxon>
        <taxon>Dictyosteliales</taxon>
        <taxon>Dictyosteliaceae</taxon>
        <taxon>Dictyostelium</taxon>
    </lineage>
</organism>
<reference key="1">
    <citation type="journal article" date="2005" name="Nature">
        <title>The genome of the social amoeba Dictyostelium discoideum.</title>
        <authorList>
            <person name="Eichinger L."/>
            <person name="Pachebat J.A."/>
            <person name="Gloeckner G."/>
            <person name="Rajandream M.A."/>
            <person name="Sucgang R."/>
            <person name="Berriman M."/>
            <person name="Song J."/>
            <person name="Olsen R."/>
            <person name="Szafranski K."/>
            <person name="Xu Q."/>
            <person name="Tunggal B."/>
            <person name="Kummerfeld S."/>
            <person name="Madera M."/>
            <person name="Konfortov B.A."/>
            <person name="Rivero F."/>
            <person name="Bankier A.T."/>
            <person name="Lehmann R."/>
            <person name="Hamlin N."/>
            <person name="Davies R."/>
            <person name="Gaudet P."/>
            <person name="Fey P."/>
            <person name="Pilcher K."/>
            <person name="Chen G."/>
            <person name="Saunders D."/>
            <person name="Sodergren E.J."/>
            <person name="Davis P."/>
            <person name="Kerhornou A."/>
            <person name="Nie X."/>
            <person name="Hall N."/>
            <person name="Anjard C."/>
            <person name="Hemphill L."/>
            <person name="Bason N."/>
            <person name="Farbrother P."/>
            <person name="Desany B."/>
            <person name="Just E."/>
            <person name="Morio T."/>
            <person name="Rost R."/>
            <person name="Churcher C.M."/>
            <person name="Cooper J."/>
            <person name="Haydock S."/>
            <person name="van Driessche N."/>
            <person name="Cronin A."/>
            <person name="Goodhead I."/>
            <person name="Muzny D.M."/>
            <person name="Mourier T."/>
            <person name="Pain A."/>
            <person name="Lu M."/>
            <person name="Harper D."/>
            <person name="Lindsay R."/>
            <person name="Hauser H."/>
            <person name="James K.D."/>
            <person name="Quiles M."/>
            <person name="Madan Babu M."/>
            <person name="Saito T."/>
            <person name="Buchrieser C."/>
            <person name="Wardroper A."/>
            <person name="Felder M."/>
            <person name="Thangavelu M."/>
            <person name="Johnson D."/>
            <person name="Knights A."/>
            <person name="Loulseged H."/>
            <person name="Mungall K.L."/>
            <person name="Oliver K."/>
            <person name="Price C."/>
            <person name="Quail M.A."/>
            <person name="Urushihara H."/>
            <person name="Hernandez J."/>
            <person name="Rabbinowitsch E."/>
            <person name="Steffen D."/>
            <person name="Sanders M."/>
            <person name="Ma J."/>
            <person name="Kohara Y."/>
            <person name="Sharp S."/>
            <person name="Simmonds M.N."/>
            <person name="Spiegler S."/>
            <person name="Tivey A."/>
            <person name="Sugano S."/>
            <person name="White B."/>
            <person name="Walker D."/>
            <person name="Woodward J.R."/>
            <person name="Winckler T."/>
            <person name="Tanaka Y."/>
            <person name="Shaulsky G."/>
            <person name="Schleicher M."/>
            <person name="Weinstock G.M."/>
            <person name="Rosenthal A."/>
            <person name="Cox E.C."/>
            <person name="Chisholm R.L."/>
            <person name="Gibbs R.A."/>
            <person name="Loomis W.F."/>
            <person name="Platzer M."/>
            <person name="Kay R.R."/>
            <person name="Williams J.G."/>
            <person name="Dear P.H."/>
            <person name="Noegel A.A."/>
            <person name="Barrell B.G."/>
            <person name="Kuspa A."/>
        </authorList>
    </citation>
    <scope>NUCLEOTIDE SEQUENCE [LARGE SCALE GENOMIC DNA]</scope>
    <source>
        <strain>AX4</strain>
    </source>
</reference>
<gene>
    <name type="ORF">DDB_G0291141</name>
</gene>
<sequence>MAGSLDDSIYNNGRSGGGGGGFKFSKGFNKDSISKRIIMMLFFSKGIRAWSCIILLYFLQSSISIISASFYMCLFSAIFSVVVEKPWNLLSSLRPSQIKKIIYHSIFNLLIIITWNSSIKFIGPIGSILASDYTFSTYPLIFNSLLQGNFLATDMSRGSIMLMIGYFLIPLFGISNRLDILGYTSSQVFMIGLFSLIVHNVLVLWKKTIVRSWNSGSSGGKNKLSSLGSCVSTIILFVFKLFEGFSSGSSGSDSINQVSYSQLFVIAIITFILYSLNQFIDDVSEKELTFNVLSKVSLTSSVIFGLLAALFIGFKDFFHPILILSFIFIINAIHILYSKSNDIQPMTFSNNMDGGNSSIKTYNSSGGGGGGSIINGNGSGNAIYYFEILKDVLRQIVDKPTSRRIFTFLVINLMFMFVEMAYGIWTNSLGLITDACHMFFDATALFIALVAEVISQWKQNDKYSYGYGRFQVLSGFVNGIFLIFIAVTILMESVERLLEPPEINTDKLLLVSVLGFIINLIGIFSFHGDHGHSHGGGGGHSHGGGEKKEKHHGHSHGGHGDHQQVTPILGEEKKKKRSVNIDGVFLHLLADTLGSVGVIVSSLIIQIWGYTLADPICSLLISILIFLSVLPLIANTAKTLLQCTPEPIQSSLYQINQFILSIDGVHNIISYHFWSHYDDMNIATLKIQLNETASSNSTLDTERIKKSISKYLNKDHNIHKCIIEFIPLLYNNNNQQQGNDVPLINHHIHNDIHHNHSSSSSSSSHHHRHN</sequence>
<name>Y1141_DICDI</name>
<proteinExistence type="inferred from homology"/>
<evidence type="ECO:0000250" key="1"/>
<evidence type="ECO:0000255" key="2"/>
<evidence type="ECO:0000256" key="3">
    <source>
        <dbReference type="SAM" id="MobiDB-lite"/>
    </source>
</evidence>
<evidence type="ECO:0000305" key="4"/>
<keyword id="KW-0406">Ion transport</keyword>
<keyword id="KW-0472">Membrane</keyword>
<keyword id="KW-0479">Metal-binding</keyword>
<keyword id="KW-1185">Reference proteome</keyword>
<keyword id="KW-0812">Transmembrane</keyword>
<keyword id="KW-1133">Transmembrane helix</keyword>
<keyword id="KW-0813">Transport</keyword>
<keyword id="KW-0862">Zinc</keyword>
<keyword id="KW-0864">Zinc transport</keyword>
<accession>Q54F34</accession>
<comment type="function">
    <text evidence="1">May be involved in zinc transport from the cytoplasm to either intracellular organelles or extracellular spaces.</text>
</comment>
<comment type="subcellular location">
    <subcellularLocation>
        <location evidence="4">Membrane</location>
        <topology evidence="4">Multi-pass membrane protein</topology>
    </subcellularLocation>
</comment>
<comment type="similarity">
    <text evidence="4">Belongs to the cation diffusion facilitator (CDF) transporter (TC 2.A.4) family. SLC30A subfamily.</text>
</comment>
<protein>
    <recommendedName>
        <fullName>Probable zinc transporter protein DDB_G0291141</fullName>
    </recommendedName>
</protein>
<feature type="chain" id="PRO_0000385368" description="Probable zinc transporter protein DDB_G0291141">
    <location>
        <begin position="1"/>
        <end position="770"/>
    </location>
</feature>
<feature type="topological domain" description="Cytoplasmic" evidence="2">
    <location>
        <begin position="1"/>
        <end position="36"/>
    </location>
</feature>
<feature type="transmembrane region" description="Helical" evidence="2">
    <location>
        <begin position="37"/>
        <end position="57"/>
    </location>
</feature>
<feature type="topological domain" description="Extracellular" evidence="2">
    <location>
        <begin position="58"/>
        <end position="62"/>
    </location>
</feature>
<feature type="transmembrane region" description="Helical" evidence="2">
    <location>
        <begin position="63"/>
        <end position="83"/>
    </location>
</feature>
<feature type="topological domain" description="Cytoplasmic" evidence="2">
    <location>
        <begin position="84"/>
        <end position="100"/>
    </location>
</feature>
<feature type="transmembrane region" description="Helical" evidence="2">
    <location>
        <begin position="101"/>
        <end position="117"/>
    </location>
</feature>
<feature type="topological domain" description="Extracellular" evidence="2">
    <location>
        <begin position="118"/>
        <end position="123"/>
    </location>
</feature>
<feature type="transmembrane region" description="Helical" evidence="2">
    <location>
        <begin position="124"/>
        <end position="146"/>
    </location>
</feature>
<feature type="topological domain" description="Cytoplasmic" evidence="2">
    <location>
        <begin position="147"/>
        <end position="154"/>
    </location>
</feature>
<feature type="transmembrane region" description="Helical" evidence="2">
    <location>
        <begin position="155"/>
        <end position="175"/>
    </location>
</feature>
<feature type="topological domain" description="Extracellular" evidence="2">
    <location>
        <begin position="176"/>
        <end position="184"/>
    </location>
</feature>
<feature type="transmembrane region" description="Helical" evidence="2">
    <location>
        <begin position="185"/>
        <end position="205"/>
    </location>
</feature>
<feature type="topological domain" description="Cytoplasmic" evidence="2">
    <location>
        <begin position="206"/>
        <end position="224"/>
    </location>
</feature>
<feature type="transmembrane region" description="Helical" evidence="2">
    <location>
        <begin position="225"/>
        <end position="245"/>
    </location>
</feature>
<feature type="topological domain" description="Extracellular" evidence="2">
    <location>
        <begin position="246"/>
        <end position="262"/>
    </location>
</feature>
<feature type="transmembrane region" description="Helical" evidence="2">
    <location>
        <begin position="263"/>
        <end position="283"/>
    </location>
</feature>
<feature type="topological domain" description="Cytoplasmic" evidence="2">
    <location>
        <begin position="284"/>
        <end position="291"/>
    </location>
</feature>
<feature type="transmembrane region" description="Helical" evidence="2">
    <location>
        <begin position="292"/>
        <end position="312"/>
    </location>
</feature>
<feature type="topological domain" description="Extracellular" evidence="2">
    <location>
        <begin position="313"/>
        <end position="316"/>
    </location>
</feature>
<feature type="transmembrane region" description="Helical" evidence="2">
    <location>
        <begin position="317"/>
        <end position="337"/>
    </location>
</feature>
<feature type="topological domain" description="Cytoplasmic" evidence="2">
    <location>
        <begin position="338"/>
        <end position="404"/>
    </location>
</feature>
<feature type="transmembrane region" description="Helical" evidence="2">
    <location>
        <begin position="405"/>
        <end position="425"/>
    </location>
</feature>
<feature type="topological domain" description="Extracellular" evidence="2">
    <location>
        <begin position="426"/>
        <end position="434"/>
    </location>
</feature>
<feature type="transmembrane region" description="Helical" evidence="2">
    <location>
        <begin position="435"/>
        <end position="455"/>
    </location>
</feature>
<feature type="topological domain" description="Cytoplasmic" evidence="2">
    <location>
        <begin position="456"/>
        <end position="469"/>
    </location>
</feature>
<feature type="transmembrane region" description="Helical" evidence="2">
    <location>
        <begin position="470"/>
        <end position="490"/>
    </location>
</feature>
<feature type="topological domain" description="Extracellular" evidence="2">
    <location>
        <begin position="491"/>
        <end position="507"/>
    </location>
</feature>
<feature type="transmembrane region" description="Helical" evidence="2">
    <location>
        <begin position="508"/>
        <end position="528"/>
    </location>
</feature>
<feature type="topological domain" description="Cytoplasmic" evidence="2">
    <location>
        <begin position="529"/>
        <end position="592"/>
    </location>
</feature>
<feature type="transmembrane region" description="Helical" evidence="2">
    <location>
        <begin position="593"/>
        <end position="613"/>
    </location>
</feature>
<feature type="topological domain" description="Extracellular" evidence="2">
    <location>
        <position position="614"/>
    </location>
</feature>
<feature type="transmembrane region" description="Helical" evidence="2">
    <location>
        <begin position="615"/>
        <end position="635"/>
    </location>
</feature>
<feature type="topological domain" description="Cytoplasmic" evidence="2">
    <location>
        <begin position="636"/>
        <end position="770"/>
    </location>
</feature>
<feature type="region of interest" description="Disordered" evidence="3">
    <location>
        <begin position="532"/>
        <end position="566"/>
    </location>
</feature>
<feature type="region of interest" description="Disordered" evidence="3">
    <location>
        <begin position="751"/>
        <end position="770"/>
    </location>
</feature>
<dbReference type="EMBL" id="AAFI02000175">
    <property type="protein sequence ID" value="EAL61854.1"/>
    <property type="molecule type" value="Genomic_DNA"/>
</dbReference>
<dbReference type="RefSeq" id="XP_635356.1">
    <property type="nucleotide sequence ID" value="XM_630264.1"/>
</dbReference>
<dbReference type="SMR" id="Q54F34"/>
<dbReference type="FunCoup" id="Q54F34">
    <property type="interactions" value="86"/>
</dbReference>
<dbReference type="STRING" id="44689.Q54F34"/>
<dbReference type="PaxDb" id="44689-DDB0266644"/>
<dbReference type="EnsemblProtists" id="EAL61854">
    <property type="protein sequence ID" value="EAL61854"/>
    <property type="gene ID" value="DDB_G0291141"/>
</dbReference>
<dbReference type="GeneID" id="8628004"/>
<dbReference type="KEGG" id="ddi:DDB_G0291141"/>
<dbReference type="dictyBase" id="DDB_G0291141">
    <property type="gene designation" value="zntD"/>
</dbReference>
<dbReference type="VEuPathDB" id="AmoebaDB:DDB_G0291141"/>
<dbReference type="eggNOG" id="KOG1484">
    <property type="taxonomic scope" value="Eukaryota"/>
</dbReference>
<dbReference type="HOGENOM" id="CLU_013430_11_0_1"/>
<dbReference type="InParanoid" id="Q54F34"/>
<dbReference type="OMA" id="MFVEMAY"/>
<dbReference type="PhylomeDB" id="Q54F34"/>
<dbReference type="Reactome" id="R-DDI-264876">
    <property type="pathway name" value="Insulin processing"/>
</dbReference>
<dbReference type="Reactome" id="R-DDI-435368">
    <property type="pathway name" value="Zinc efflux and compartmentalization by the SLC30 family"/>
</dbReference>
<dbReference type="PRO" id="PR:Q54F34"/>
<dbReference type="Proteomes" id="UP000002195">
    <property type="component" value="Chromosome 5"/>
</dbReference>
<dbReference type="GO" id="GO:0031410">
    <property type="term" value="C:cytoplasmic vesicle"/>
    <property type="evidence" value="ECO:0000318"/>
    <property type="project" value="GO_Central"/>
</dbReference>
<dbReference type="GO" id="GO:0005794">
    <property type="term" value="C:Golgi apparatus"/>
    <property type="evidence" value="ECO:0000314"/>
    <property type="project" value="dictyBase"/>
</dbReference>
<dbReference type="GO" id="GO:0016020">
    <property type="term" value="C:membrane"/>
    <property type="evidence" value="ECO:0007669"/>
    <property type="project" value="UniProtKB-SubCell"/>
</dbReference>
<dbReference type="GO" id="GO:0055037">
    <property type="term" value="C:recycling endosome"/>
    <property type="evidence" value="ECO:0000314"/>
    <property type="project" value="dictyBase"/>
</dbReference>
<dbReference type="GO" id="GO:0046872">
    <property type="term" value="F:metal ion binding"/>
    <property type="evidence" value="ECO:0007669"/>
    <property type="project" value="UniProtKB-KW"/>
</dbReference>
<dbReference type="GO" id="GO:0005385">
    <property type="term" value="F:zinc ion transmembrane transporter activity"/>
    <property type="evidence" value="ECO:0000318"/>
    <property type="project" value="GO_Central"/>
</dbReference>
<dbReference type="GO" id="GO:0006882">
    <property type="term" value="P:intracellular zinc ion homeostasis"/>
    <property type="evidence" value="ECO:0000318"/>
    <property type="project" value="GO_Central"/>
</dbReference>
<dbReference type="GO" id="GO:1904257">
    <property type="term" value="P:zinc ion import into Golgi lumen"/>
    <property type="evidence" value="ECO:0000318"/>
    <property type="project" value="GO_Central"/>
</dbReference>
<dbReference type="GO" id="GO:0006829">
    <property type="term" value="P:zinc ion transport"/>
    <property type="evidence" value="ECO:0000250"/>
    <property type="project" value="dictyBase"/>
</dbReference>
<dbReference type="Gene3D" id="1.20.1510.10">
    <property type="entry name" value="Cation efflux protein transmembrane domain"/>
    <property type="match status" value="1"/>
</dbReference>
<dbReference type="InterPro" id="IPR002524">
    <property type="entry name" value="Cation_efflux"/>
</dbReference>
<dbReference type="InterPro" id="IPR027469">
    <property type="entry name" value="Cation_efflux_TMD_sf"/>
</dbReference>
<dbReference type="InterPro" id="IPR045316">
    <property type="entry name" value="Msc2-like"/>
</dbReference>
<dbReference type="NCBIfam" id="TIGR01297">
    <property type="entry name" value="CDF"/>
    <property type="match status" value="1"/>
</dbReference>
<dbReference type="PANTHER" id="PTHR45755">
    <property type="match status" value="1"/>
</dbReference>
<dbReference type="PANTHER" id="PTHR45755:SF4">
    <property type="entry name" value="ZINC TRANSPORTER 7"/>
    <property type="match status" value="1"/>
</dbReference>
<dbReference type="Pfam" id="PF01545">
    <property type="entry name" value="Cation_efflux"/>
    <property type="match status" value="1"/>
</dbReference>
<dbReference type="SUPFAM" id="SSF161111">
    <property type="entry name" value="Cation efflux protein transmembrane domain-like"/>
    <property type="match status" value="1"/>
</dbReference>